<organism>
    <name type="scientific">Treponema pallidum (strain Nichols)</name>
    <dbReference type="NCBI Taxonomy" id="243276"/>
    <lineage>
        <taxon>Bacteria</taxon>
        <taxon>Pseudomonadati</taxon>
        <taxon>Spirochaetota</taxon>
        <taxon>Spirochaetia</taxon>
        <taxon>Spirochaetales</taxon>
        <taxon>Treponemataceae</taxon>
        <taxon>Treponema</taxon>
    </lineage>
</organism>
<sequence length="127" mass="14527">MQGSVQIQKGNISSSYTPEKHPSHPTSANGSMSPKRICELRKEDPSSLHKQLLKNSLEKGTEHCDRTTKTYGQIFQLFCLCCAGAAPFYRARAFRLQSTFLIYTLHCSSDSVSTSTHYFRRLYSRRW</sequence>
<evidence type="ECO:0000256" key="1">
    <source>
        <dbReference type="SAM" id="MobiDB-lite"/>
    </source>
</evidence>
<dbReference type="EMBL" id="AE000520">
    <property type="protein sequence ID" value="AAC65353.1"/>
    <property type="molecule type" value="Genomic_DNA"/>
</dbReference>
<dbReference type="PIR" id="A71334">
    <property type="entry name" value="A71334"/>
</dbReference>
<dbReference type="RefSeq" id="WP_010881803.1">
    <property type="nucleotide sequence ID" value="NC_021490.2"/>
</dbReference>
<dbReference type="SMR" id="O83374"/>
<dbReference type="EnsemblBacteria" id="AAC65353">
    <property type="protein sequence ID" value="AAC65353"/>
    <property type="gene ID" value="TP_0355"/>
</dbReference>
<dbReference type="KEGG" id="tpa:TP_0355"/>
<dbReference type="KEGG" id="tpw:TPANIC_0355"/>
<dbReference type="HOGENOM" id="CLU_1969551_0_0_12"/>
<dbReference type="Proteomes" id="UP000000811">
    <property type="component" value="Chromosome"/>
</dbReference>
<gene>
    <name type="ordered locus">TP_0355</name>
</gene>
<feature type="chain" id="PRO_0000202240" description="Uncharacterized protein TP_0355">
    <location>
        <begin position="1"/>
        <end position="127"/>
    </location>
</feature>
<feature type="region of interest" description="Disordered" evidence="1">
    <location>
        <begin position="1"/>
        <end position="36"/>
    </location>
</feature>
<feature type="compositionally biased region" description="Polar residues" evidence="1">
    <location>
        <begin position="1"/>
        <end position="17"/>
    </location>
</feature>
<name>Y355_TREPA</name>
<reference key="1">
    <citation type="journal article" date="1998" name="Science">
        <title>Complete genome sequence of Treponema pallidum, the syphilis spirochete.</title>
        <authorList>
            <person name="Fraser C.M."/>
            <person name="Norris S.J."/>
            <person name="Weinstock G.M."/>
            <person name="White O."/>
            <person name="Sutton G.G."/>
            <person name="Dodson R.J."/>
            <person name="Gwinn M.L."/>
            <person name="Hickey E.K."/>
            <person name="Clayton R.A."/>
            <person name="Ketchum K.A."/>
            <person name="Sodergren E."/>
            <person name="Hardham J.M."/>
            <person name="McLeod M.P."/>
            <person name="Salzberg S.L."/>
            <person name="Peterson J.D."/>
            <person name="Khalak H.G."/>
            <person name="Richardson D.L."/>
            <person name="Howell J.K."/>
            <person name="Chidambaram M."/>
            <person name="Utterback T.R."/>
            <person name="McDonald L.A."/>
            <person name="Artiach P."/>
            <person name="Bowman C."/>
            <person name="Cotton M.D."/>
            <person name="Fujii C."/>
            <person name="Garland S.A."/>
            <person name="Hatch B."/>
            <person name="Horst K."/>
            <person name="Roberts K.M."/>
            <person name="Sandusky M."/>
            <person name="Weidman J.F."/>
            <person name="Smith H.O."/>
            <person name="Venter J.C."/>
        </authorList>
    </citation>
    <scope>NUCLEOTIDE SEQUENCE [LARGE SCALE GENOMIC DNA]</scope>
    <source>
        <strain>Nichols</strain>
    </source>
</reference>
<proteinExistence type="predicted"/>
<keyword id="KW-1185">Reference proteome</keyword>
<protein>
    <recommendedName>
        <fullName>Uncharacterized protein TP_0355</fullName>
    </recommendedName>
</protein>
<accession>O83374</accession>